<comment type="catalytic activity">
    <reaction evidence="1">
        <text>beta-D-fructose 1,6-bisphosphate + H2O = beta-D-fructose 6-phosphate + phosphate</text>
        <dbReference type="Rhea" id="RHEA:11064"/>
        <dbReference type="ChEBI" id="CHEBI:15377"/>
        <dbReference type="ChEBI" id="CHEBI:32966"/>
        <dbReference type="ChEBI" id="CHEBI:43474"/>
        <dbReference type="ChEBI" id="CHEBI:57634"/>
        <dbReference type="EC" id="3.1.3.11"/>
    </reaction>
</comment>
<comment type="cofactor">
    <cofactor evidence="1">
        <name>Mg(2+)</name>
        <dbReference type="ChEBI" id="CHEBI:18420"/>
    </cofactor>
    <text evidence="1">Binds 2 magnesium ions per subunit.</text>
</comment>
<comment type="pathway">
    <text evidence="1">Carbohydrate biosynthesis; Calvin cycle.</text>
</comment>
<comment type="subunit">
    <text evidence="1">Homotetramer.</text>
</comment>
<comment type="subcellular location">
    <subcellularLocation>
        <location evidence="1">Cytoplasm</location>
    </subcellularLocation>
</comment>
<comment type="similarity">
    <text evidence="1">Belongs to the FBPase class 1 family.</text>
</comment>
<evidence type="ECO:0000255" key="1">
    <source>
        <dbReference type="HAMAP-Rule" id="MF_01855"/>
    </source>
</evidence>
<reference key="1">
    <citation type="journal article" date="2007" name="Science">
        <title>Legumes symbioses: absence of nod genes in photosynthetic bradyrhizobia.</title>
        <authorList>
            <person name="Giraud E."/>
            <person name="Moulin L."/>
            <person name="Vallenet D."/>
            <person name="Barbe V."/>
            <person name="Cytryn E."/>
            <person name="Avarre J.-C."/>
            <person name="Jaubert M."/>
            <person name="Simon D."/>
            <person name="Cartieaux F."/>
            <person name="Prin Y."/>
            <person name="Bena G."/>
            <person name="Hannibal L."/>
            <person name="Fardoux J."/>
            <person name="Kojadinovic M."/>
            <person name="Vuillet L."/>
            <person name="Lajus A."/>
            <person name="Cruveiller S."/>
            <person name="Rouy Z."/>
            <person name="Mangenot S."/>
            <person name="Segurens B."/>
            <person name="Dossat C."/>
            <person name="Franck W.L."/>
            <person name="Chang W.-S."/>
            <person name="Saunders E."/>
            <person name="Bruce D."/>
            <person name="Richardson P."/>
            <person name="Normand P."/>
            <person name="Dreyfus B."/>
            <person name="Pignol D."/>
            <person name="Stacey G."/>
            <person name="Emerich D."/>
            <person name="Vermeglio A."/>
            <person name="Medigue C."/>
            <person name="Sadowsky M."/>
        </authorList>
    </citation>
    <scope>NUCLEOTIDE SEQUENCE [LARGE SCALE GENOMIC DNA]</scope>
    <source>
        <strain>BTAi1 / ATCC BAA-1182</strain>
    </source>
</reference>
<accession>A5EQ67</accession>
<organism>
    <name type="scientific">Bradyrhizobium sp. (strain BTAi1 / ATCC BAA-1182)</name>
    <dbReference type="NCBI Taxonomy" id="288000"/>
    <lineage>
        <taxon>Bacteria</taxon>
        <taxon>Pseudomonadati</taxon>
        <taxon>Pseudomonadota</taxon>
        <taxon>Alphaproteobacteria</taxon>
        <taxon>Hyphomicrobiales</taxon>
        <taxon>Nitrobacteraceae</taxon>
        <taxon>Bradyrhizobium</taxon>
    </lineage>
</organism>
<name>F16A2_BRASB</name>
<dbReference type="EC" id="3.1.3.11" evidence="1"/>
<dbReference type="EMBL" id="CP000494">
    <property type="protein sequence ID" value="ABQ38311.1"/>
    <property type="molecule type" value="Genomic_DNA"/>
</dbReference>
<dbReference type="RefSeq" id="WP_012046252.1">
    <property type="nucleotide sequence ID" value="NC_009485.1"/>
</dbReference>
<dbReference type="SMR" id="A5EQ67"/>
<dbReference type="STRING" id="288000.BBta_6401"/>
<dbReference type="KEGG" id="bbt:BBta_6401"/>
<dbReference type="eggNOG" id="COG0158">
    <property type="taxonomic scope" value="Bacteria"/>
</dbReference>
<dbReference type="HOGENOM" id="CLU_039977_0_0_5"/>
<dbReference type="OrthoDB" id="9806756at2"/>
<dbReference type="UniPathway" id="UPA00116"/>
<dbReference type="Proteomes" id="UP000000246">
    <property type="component" value="Chromosome"/>
</dbReference>
<dbReference type="GO" id="GO:0005829">
    <property type="term" value="C:cytosol"/>
    <property type="evidence" value="ECO:0007669"/>
    <property type="project" value="TreeGrafter"/>
</dbReference>
<dbReference type="GO" id="GO:0042132">
    <property type="term" value="F:fructose 1,6-bisphosphate 1-phosphatase activity"/>
    <property type="evidence" value="ECO:0007669"/>
    <property type="project" value="UniProtKB-UniRule"/>
</dbReference>
<dbReference type="GO" id="GO:0000287">
    <property type="term" value="F:magnesium ion binding"/>
    <property type="evidence" value="ECO:0007669"/>
    <property type="project" value="UniProtKB-UniRule"/>
</dbReference>
<dbReference type="GO" id="GO:0030388">
    <property type="term" value="P:fructose 1,6-bisphosphate metabolic process"/>
    <property type="evidence" value="ECO:0007669"/>
    <property type="project" value="TreeGrafter"/>
</dbReference>
<dbReference type="GO" id="GO:0006002">
    <property type="term" value="P:fructose 6-phosphate metabolic process"/>
    <property type="evidence" value="ECO:0007669"/>
    <property type="project" value="TreeGrafter"/>
</dbReference>
<dbReference type="GO" id="GO:0006000">
    <property type="term" value="P:fructose metabolic process"/>
    <property type="evidence" value="ECO:0007669"/>
    <property type="project" value="TreeGrafter"/>
</dbReference>
<dbReference type="GO" id="GO:0006094">
    <property type="term" value="P:gluconeogenesis"/>
    <property type="evidence" value="ECO:0007669"/>
    <property type="project" value="UniProtKB-UniRule"/>
</dbReference>
<dbReference type="GO" id="GO:0019253">
    <property type="term" value="P:reductive pentose-phosphate cycle"/>
    <property type="evidence" value="ECO:0007669"/>
    <property type="project" value="UniProtKB-UniRule"/>
</dbReference>
<dbReference type="GO" id="GO:0005986">
    <property type="term" value="P:sucrose biosynthetic process"/>
    <property type="evidence" value="ECO:0007669"/>
    <property type="project" value="TreeGrafter"/>
</dbReference>
<dbReference type="CDD" id="cd00354">
    <property type="entry name" value="FBPase"/>
    <property type="match status" value="1"/>
</dbReference>
<dbReference type="FunFam" id="3.40.190.80:FF:000011">
    <property type="entry name" value="Fructose-1,6-bisphosphatase class 1"/>
    <property type="match status" value="1"/>
</dbReference>
<dbReference type="Gene3D" id="3.40.190.80">
    <property type="match status" value="1"/>
</dbReference>
<dbReference type="Gene3D" id="3.30.540.10">
    <property type="entry name" value="Fructose-1,6-Bisphosphatase, subunit A, domain 1"/>
    <property type="match status" value="1"/>
</dbReference>
<dbReference type="HAMAP" id="MF_01855">
    <property type="entry name" value="FBPase_class1"/>
    <property type="match status" value="1"/>
</dbReference>
<dbReference type="InterPro" id="IPR044015">
    <property type="entry name" value="FBPase_C_dom"/>
</dbReference>
<dbReference type="InterPro" id="IPR000146">
    <property type="entry name" value="FBPase_class-1"/>
</dbReference>
<dbReference type="InterPro" id="IPR033391">
    <property type="entry name" value="FBPase_N"/>
</dbReference>
<dbReference type="InterPro" id="IPR028343">
    <property type="entry name" value="FBPtase"/>
</dbReference>
<dbReference type="InterPro" id="IPR020548">
    <property type="entry name" value="Fructose_bisphosphatase_AS"/>
</dbReference>
<dbReference type="NCBIfam" id="NF006780">
    <property type="entry name" value="PRK09293.1-4"/>
    <property type="match status" value="1"/>
</dbReference>
<dbReference type="PANTHER" id="PTHR11556">
    <property type="entry name" value="FRUCTOSE-1,6-BISPHOSPHATASE-RELATED"/>
    <property type="match status" value="1"/>
</dbReference>
<dbReference type="PANTHER" id="PTHR11556:SF35">
    <property type="entry name" value="SEDOHEPTULOSE-1,7-BISPHOSPHATASE, CHLOROPLASTIC"/>
    <property type="match status" value="1"/>
</dbReference>
<dbReference type="Pfam" id="PF00316">
    <property type="entry name" value="FBPase"/>
    <property type="match status" value="1"/>
</dbReference>
<dbReference type="Pfam" id="PF18913">
    <property type="entry name" value="FBPase_C"/>
    <property type="match status" value="1"/>
</dbReference>
<dbReference type="PIRSF" id="PIRSF500210">
    <property type="entry name" value="FBPtase"/>
    <property type="match status" value="1"/>
</dbReference>
<dbReference type="PIRSF" id="PIRSF000904">
    <property type="entry name" value="FBPtase_SBPase"/>
    <property type="match status" value="1"/>
</dbReference>
<dbReference type="PRINTS" id="PR00115">
    <property type="entry name" value="F16BPHPHTASE"/>
</dbReference>
<dbReference type="SUPFAM" id="SSF56655">
    <property type="entry name" value="Carbohydrate phosphatase"/>
    <property type="match status" value="1"/>
</dbReference>
<dbReference type="PROSITE" id="PS00124">
    <property type="entry name" value="FBPASE"/>
    <property type="match status" value="1"/>
</dbReference>
<keyword id="KW-0113">Calvin cycle</keyword>
<keyword id="KW-0119">Carbohydrate metabolism</keyword>
<keyword id="KW-0963">Cytoplasm</keyword>
<keyword id="KW-0378">Hydrolase</keyword>
<keyword id="KW-0460">Magnesium</keyword>
<keyword id="KW-0479">Metal-binding</keyword>
<keyword id="KW-1185">Reference proteome</keyword>
<protein>
    <recommendedName>
        <fullName evidence="1">Fructose-1,6-bisphosphatase class 1 2</fullName>
        <shortName evidence="1">FBPase class 1 2</shortName>
        <ecNumber evidence="1">3.1.3.11</ecNumber>
    </recommendedName>
    <alternativeName>
        <fullName evidence="1">D-fructose-1,6-bisphosphate 1-phosphohydrolase class 1 2</fullName>
    </alternativeName>
</protein>
<gene>
    <name evidence="1" type="primary">fbp2</name>
    <name type="ordered locus">BBta_6401</name>
</gene>
<sequence>MAREWPMEQSPTLQAHLALQNADADCAAVIEALADAARELARQIAIAPLAGFDEGAATVNADGDVQKALDIVADNLMRDALRKAPVAGILSEEVDRPETVNAAAPLCVAIDPLDGSSNLQNNISVGTIFSIRPRGRDVLSSFFEPGTAQRAAGFFVYGPQTCLVLAIDHRVDLYVLHPTLREFVLARSGLRIPQDTPEFAINASNRRHWSGTVRNYVDECLAGAAGPRGRDFNMRWIASLVAEAYRILMRGGVFLYPADSRPGYREGRLRLVYEAHPMALIMEWAGGSASSGRSRILELSARSPHQRAPLIMGDVRLVRDVDQLHEGVEPLFETSDAPLFARRGLFR</sequence>
<proteinExistence type="inferred from homology"/>
<feature type="chain" id="PRO_0000364474" description="Fructose-1,6-bisphosphatase class 1 2">
    <location>
        <begin position="1"/>
        <end position="347"/>
    </location>
</feature>
<feature type="binding site" evidence="1">
    <location>
        <position position="92"/>
    </location>
    <ligand>
        <name>Mg(2+)</name>
        <dbReference type="ChEBI" id="CHEBI:18420"/>
        <label>1</label>
    </ligand>
</feature>
<feature type="binding site" evidence="1">
    <location>
        <position position="111"/>
    </location>
    <ligand>
        <name>Mg(2+)</name>
        <dbReference type="ChEBI" id="CHEBI:18420"/>
        <label>1</label>
    </ligand>
</feature>
<feature type="binding site" evidence="1">
    <location>
        <position position="111"/>
    </location>
    <ligand>
        <name>Mg(2+)</name>
        <dbReference type="ChEBI" id="CHEBI:18420"/>
        <label>2</label>
    </ligand>
</feature>
<feature type="binding site" evidence="1">
    <location>
        <position position="113"/>
    </location>
    <ligand>
        <name>Mg(2+)</name>
        <dbReference type="ChEBI" id="CHEBI:18420"/>
        <label>1</label>
    </ligand>
</feature>
<feature type="binding site" evidence="1">
    <location>
        <begin position="114"/>
        <end position="117"/>
    </location>
    <ligand>
        <name>substrate</name>
    </ligand>
</feature>
<feature type="binding site" evidence="1">
    <location>
        <position position="114"/>
    </location>
    <ligand>
        <name>Mg(2+)</name>
        <dbReference type="ChEBI" id="CHEBI:18420"/>
        <label>2</label>
    </ligand>
</feature>
<feature type="binding site" evidence="1">
    <location>
        <position position="202"/>
    </location>
    <ligand>
        <name>substrate</name>
    </ligand>
</feature>
<feature type="binding site" evidence="1">
    <location>
        <position position="274"/>
    </location>
    <ligand>
        <name>Mg(2+)</name>
        <dbReference type="ChEBI" id="CHEBI:18420"/>
        <label>2</label>
    </ligand>
</feature>